<dbReference type="EC" id="1.14.15.6" evidence="2"/>
<dbReference type="EMBL" id="DQ228169">
    <property type="protein sequence ID" value="ABB76810.1"/>
    <property type="molecule type" value="mRNA"/>
</dbReference>
<dbReference type="RefSeq" id="NP_001271838.1">
    <property type="nucleotide sequence ID" value="NM_001284909.1"/>
</dbReference>
<dbReference type="SMR" id="Q2XV99"/>
<dbReference type="STRING" id="9541.ENSMFAP00000001651"/>
<dbReference type="eggNOG" id="KOG0159">
    <property type="taxonomic scope" value="Eukaryota"/>
</dbReference>
<dbReference type="UniPathway" id="UPA00229"/>
<dbReference type="UniPathway" id="UPA00296"/>
<dbReference type="Proteomes" id="UP000233100">
    <property type="component" value="Unplaced"/>
</dbReference>
<dbReference type="GO" id="GO:0005743">
    <property type="term" value="C:mitochondrial inner membrane"/>
    <property type="evidence" value="ECO:0000250"/>
    <property type="project" value="UniProtKB"/>
</dbReference>
<dbReference type="GO" id="GO:0008386">
    <property type="term" value="F:cholesterol monooxygenase (side-chain-cleaving) activity"/>
    <property type="evidence" value="ECO:0000250"/>
    <property type="project" value="UniProtKB"/>
</dbReference>
<dbReference type="GO" id="GO:0020037">
    <property type="term" value="F:heme binding"/>
    <property type="evidence" value="ECO:0000250"/>
    <property type="project" value="UniProtKB"/>
</dbReference>
<dbReference type="GO" id="GO:0005506">
    <property type="term" value="F:iron ion binding"/>
    <property type="evidence" value="ECO:0007669"/>
    <property type="project" value="InterPro"/>
</dbReference>
<dbReference type="GO" id="GO:0006700">
    <property type="term" value="P:C21-steroid hormone biosynthetic process"/>
    <property type="evidence" value="ECO:0000250"/>
    <property type="project" value="UniProtKB"/>
</dbReference>
<dbReference type="GO" id="GO:0071375">
    <property type="term" value="P:cellular response to peptide hormone stimulus"/>
    <property type="evidence" value="ECO:0007669"/>
    <property type="project" value="TreeGrafter"/>
</dbReference>
<dbReference type="GO" id="GO:0008203">
    <property type="term" value="P:cholesterol metabolic process"/>
    <property type="evidence" value="ECO:0000250"/>
    <property type="project" value="UniProtKB"/>
</dbReference>
<dbReference type="GO" id="GO:0034650">
    <property type="term" value="P:cortisol metabolic process"/>
    <property type="evidence" value="ECO:0007669"/>
    <property type="project" value="TreeGrafter"/>
</dbReference>
<dbReference type="GO" id="GO:0006704">
    <property type="term" value="P:glucocorticoid biosynthetic process"/>
    <property type="evidence" value="ECO:0007669"/>
    <property type="project" value="TreeGrafter"/>
</dbReference>
<dbReference type="FunFam" id="1.10.630.10:FF:000015">
    <property type="entry name" value="Cholesterol side-chain cleavage enzyme, mitochondrial"/>
    <property type="match status" value="1"/>
</dbReference>
<dbReference type="Gene3D" id="1.10.630.10">
    <property type="entry name" value="Cytochrome P450"/>
    <property type="match status" value="1"/>
</dbReference>
<dbReference type="InterPro" id="IPR050479">
    <property type="entry name" value="CYP11_CYP27_families"/>
</dbReference>
<dbReference type="InterPro" id="IPR001128">
    <property type="entry name" value="Cyt_P450"/>
</dbReference>
<dbReference type="InterPro" id="IPR017972">
    <property type="entry name" value="Cyt_P450_CS"/>
</dbReference>
<dbReference type="InterPro" id="IPR002401">
    <property type="entry name" value="Cyt_P450_E_grp-I"/>
</dbReference>
<dbReference type="InterPro" id="IPR036396">
    <property type="entry name" value="Cyt_P450_sf"/>
</dbReference>
<dbReference type="PANTHER" id="PTHR24279:SF3">
    <property type="entry name" value="CHOLESTEROL SIDE-CHAIN CLEAVAGE ENZYME, MITOCHONDRIAL"/>
    <property type="match status" value="1"/>
</dbReference>
<dbReference type="PANTHER" id="PTHR24279">
    <property type="entry name" value="CYTOCHROME P450"/>
    <property type="match status" value="1"/>
</dbReference>
<dbReference type="Pfam" id="PF00067">
    <property type="entry name" value="p450"/>
    <property type="match status" value="1"/>
</dbReference>
<dbReference type="PRINTS" id="PR00463">
    <property type="entry name" value="EP450I"/>
</dbReference>
<dbReference type="PRINTS" id="PR00385">
    <property type="entry name" value="P450"/>
</dbReference>
<dbReference type="SUPFAM" id="SSF48264">
    <property type="entry name" value="Cytochrome P450"/>
    <property type="match status" value="1"/>
</dbReference>
<dbReference type="PROSITE" id="PS00086">
    <property type="entry name" value="CYTOCHROME_P450"/>
    <property type="match status" value="1"/>
</dbReference>
<comment type="function">
    <text evidence="2">A cytochrome P450 monooxygenase that catalyzes the side-chain hydroxylation and cleavage of cholesterol to pregnenolone, the precursor of most steroid hormones. Catalyzes three sequential oxidation reactions of cholesterol, namely the hydroxylation at C22 followed with the hydroxylation at C20 to yield 20R,22R-hydroxycholesterol that is further cleaved between C20 and C22 to yield the C21-steroid pregnenolone and 4-methylpentanal. Mechanistically, uses molecular oxygen inserting one oxygen atom into a substrate and reducing the second into a water molecule. Two electrons are provided by NADPH via a two-protein mitochondrial transfer system comprising flavoprotein FDXR (adrenodoxin/ferredoxin reductase) and nonheme iron-sulfur protein FDX1 or FDX2 (adrenodoxin/ferredoxin).</text>
</comment>
<comment type="catalytic activity">
    <reaction evidence="2">
        <text>6 reduced [adrenodoxin] + cholesterol + 3 O2 + 6 H(+) = 4-methylpentanal + pregnenolone + 6 oxidized [adrenodoxin] + 4 H2O</text>
        <dbReference type="Rhea" id="RHEA:35739"/>
        <dbReference type="Rhea" id="RHEA-COMP:9998"/>
        <dbReference type="Rhea" id="RHEA-COMP:9999"/>
        <dbReference type="ChEBI" id="CHEBI:15377"/>
        <dbReference type="ChEBI" id="CHEBI:15378"/>
        <dbReference type="ChEBI" id="CHEBI:15379"/>
        <dbReference type="ChEBI" id="CHEBI:16113"/>
        <dbReference type="ChEBI" id="CHEBI:16581"/>
        <dbReference type="ChEBI" id="CHEBI:17998"/>
        <dbReference type="ChEBI" id="CHEBI:33737"/>
        <dbReference type="ChEBI" id="CHEBI:33738"/>
        <dbReference type="EC" id="1.14.15.6"/>
    </reaction>
    <physiologicalReaction direction="left-to-right" evidence="2">
        <dbReference type="Rhea" id="RHEA:35740"/>
    </physiologicalReaction>
</comment>
<comment type="catalytic activity">
    <reaction evidence="2">
        <text>2 reduced [adrenodoxin] + cholesterol + O2 + 2 H(+) = (22R)-hydroxycholesterol + 2 oxidized [adrenodoxin] + H2O</text>
        <dbReference type="Rhea" id="RHEA:34335"/>
        <dbReference type="Rhea" id="RHEA-COMP:9998"/>
        <dbReference type="Rhea" id="RHEA-COMP:9999"/>
        <dbReference type="ChEBI" id="CHEBI:15377"/>
        <dbReference type="ChEBI" id="CHEBI:15378"/>
        <dbReference type="ChEBI" id="CHEBI:15379"/>
        <dbReference type="ChEBI" id="CHEBI:16113"/>
        <dbReference type="ChEBI" id="CHEBI:33737"/>
        <dbReference type="ChEBI" id="CHEBI:33738"/>
        <dbReference type="ChEBI" id="CHEBI:67237"/>
    </reaction>
    <physiologicalReaction direction="left-to-right" evidence="2">
        <dbReference type="Rhea" id="RHEA:34336"/>
    </physiologicalReaction>
</comment>
<comment type="catalytic activity">
    <reaction evidence="2">
        <text>(22R)-hydroxycholesterol + 2 reduced [adrenodoxin] + O2 + 2 H(+) = (20R,22R)-20,22-dihydroxycholesterol + 2 oxidized [adrenodoxin] + H2O</text>
        <dbReference type="Rhea" id="RHEA:34339"/>
        <dbReference type="Rhea" id="RHEA-COMP:9998"/>
        <dbReference type="Rhea" id="RHEA-COMP:9999"/>
        <dbReference type="ChEBI" id="CHEBI:1294"/>
        <dbReference type="ChEBI" id="CHEBI:15377"/>
        <dbReference type="ChEBI" id="CHEBI:15378"/>
        <dbReference type="ChEBI" id="CHEBI:15379"/>
        <dbReference type="ChEBI" id="CHEBI:33737"/>
        <dbReference type="ChEBI" id="CHEBI:33738"/>
        <dbReference type="ChEBI" id="CHEBI:67237"/>
    </reaction>
    <physiologicalReaction direction="left-to-right" evidence="2">
        <dbReference type="Rhea" id="RHEA:34340"/>
    </physiologicalReaction>
</comment>
<comment type="catalytic activity">
    <reaction evidence="2">
        <text>(20R,22R)-20,22-dihydroxycholesterol + 2 reduced [adrenodoxin] + O2 + 2 H(+) = 4-methylpentanal + pregnenolone + 2 oxidized [adrenodoxin] + 2 H2O</text>
        <dbReference type="Rhea" id="RHEA:34343"/>
        <dbReference type="Rhea" id="RHEA-COMP:9998"/>
        <dbReference type="Rhea" id="RHEA-COMP:9999"/>
        <dbReference type="ChEBI" id="CHEBI:1294"/>
        <dbReference type="ChEBI" id="CHEBI:15377"/>
        <dbReference type="ChEBI" id="CHEBI:15378"/>
        <dbReference type="ChEBI" id="CHEBI:15379"/>
        <dbReference type="ChEBI" id="CHEBI:16581"/>
        <dbReference type="ChEBI" id="CHEBI:17998"/>
        <dbReference type="ChEBI" id="CHEBI:33737"/>
        <dbReference type="ChEBI" id="CHEBI:33738"/>
    </reaction>
    <physiologicalReaction direction="left-to-right" evidence="2">
        <dbReference type="Rhea" id="RHEA:34344"/>
    </physiologicalReaction>
</comment>
<comment type="cofactor">
    <cofactor evidence="2">
        <name>heme</name>
        <dbReference type="ChEBI" id="CHEBI:30413"/>
    </cofactor>
</comment>
<comment type="pathway">
    <text evidence="2">Lipid metabolism; C21-steroid hormone metabolism.</text>
</comment>
<comment type="pathway">
    <text evidence="2">Steroid metabolism; cholesterol metabolism.</text>
</comment>
<comment type="subunit">
    <text evidence="2">Interacts with FDX1/adrenodoxin.</text>
</comment>
<comment type="subcellular location">
    <subcellularLocation>
        <location evidence="3">Mitochondrion inner membrane</location>
        <topology evidence="4">Peripheral membrane protein</topology>
    </subcellularLocation>
    <text evidence="3">Localizes to the matrix side of the mitochondrion inner membrane.</text>
</comment>
<comment type="similarity">
    <text evidence="4">Belongs to the cytochrome P450 family.</text>
</comment>
<feature type="transit peptide" description="Mitochondrion" evidence="1">
    <location>
        <begin position="1"/>
        <end position="39"/>
    </location>
</feature>
<feature type="chain" id="PRO_0000045764" description="Cholesterol side-chain cleavage enzyme, mitochondrial">
    <location>
        <begin position="40"/>
        <end position="521"/>
    </location>
</feature>
<feature type="binding site" description="axial binding residue" evidence="2">
    <location>
        <position position="462"/>
    </location>
    <ligand>
        <name>heme</name>
        <dbReference type="ChEBI" id="CHEBI:30413"/>
    </ligand>
    <ligandPart>
        <name>Fe</name>
        <dbReference type="ChEBI" id="CHEBI:18248"/>
    </ligandPart>
</feature>
<organism>
    <name type="scientific">Macaca fascicularis</name>
    <name type="common">Crab-eating macaque</name>
    <name type="synonym">Cynomolgus monkey</name>
    <dbReference type="NCBI Taxonomy" id="9541"/>
    <lineage>
        <taxon>Eukaryota</taxon>
        <taxon>Metazoa</taxon>
        <taxon>Chordata</taxon>
        <taxon>Craniata</taxon>
        <taxon>Vertebrata</taxon>
        <taxon>Euteleostomi</taxon>
        <taxon>Mammalia</taxon>
        <taxon>Eutheria</taxon>
        <taxon>Euarchontoglires</taxon>
        <taxon>Primates</taxon>
        <taxon>Haplorrhini</taxon>
        <taxon>Catarrhini</taxon>
        <taxon>Cercopithecidae</taxon>
        <taxon>Cercopithecinae</taxon>
        <taxon>Macaca</taxon>
    </lineage>
</organism>
<proteinExistence type="evidence at transcript level"/>
<gene>
    <name type="primary">CYP11A1</name>
    <name type="synonym">CYP11A</name>
</gene>
<accession>Q2XV99</accession>
<evidence type="ECO:0000250" key="1">
    <source>
        <dbReference type="UniProtKB" id="P00189"/>
    </source>
</evidence>
<evidence type="ECO:0000250" key="2">
    <source>
        <dbReference type="UniProtKB" id="P05108"/>
    </source>
</evidence>
<evidence type="ECO:0000250" key="3">
    <source>
        <dbReference type="UniProtKB" id="P14137"/>
    </source>
</evidence>
<evidence type="ECO:0000305" key="4"/>
<reference key="1">
    <citation type="submission" date="2005-09" db="EMBL/GenBank/DDBJ databases">
        <authorList>
            <person name="Liu H."/>
            <person name="Larbie F."/>
            <person name="Luu-The V."/>
        </authorList>
    </citation>
    <scope>NUCLEOTIDE SEQUENCE [MRNA]</scope>
</reference>
<name>CP11A_MACFA</name>
<keyword id="KW-0153">Cholesterol metabolism</keyword>
<keyword id="KW-0349">Heme</keyword>
<keyword id="KW-0408">Iron</keyword>
<keyword id="KW-0443">Lipid metabolism</keyword>
<keyword id="KW-0472">Membrane</keyword>
<keyword id="KW-0479">Metal-binding</keyword>
<keyword id="KW-0496">Mitochondrion</keyword>
<keyword id="KW-0999">Mitochondrion inner membrane</keyword>
<keyword id="KW-0503">Monooxygenase</keyword>
<keyword id="KW-0560">Oxidoreductase</keyword>
<keyword id="KW-1185">Reference proteome</keyword>
<keyword id="KW-0753">Steroid metabolism</keyword>
<keyword id="KW-0755">Steroidogenesis</keyword>
<keyword id="KW-1207">Sterol metabolism</keyword>
<keyword id="KW-0809">Transit peptide</keyword>
<sequence>MLAKGLPPRSVLVKGCQTFLSAPKERLGHLRVPTSEGAGISTRSPRPFNEIPSPGDNGWLNLYHFWRETGTHKVHLHHVQNFQKYDPIYREKLGNVESVYVIDPEDVALLFKSEGPNPERFLIPPWVAYHQYYQRPIGVLLKKSAAWKKDRVALNQEVMAPETTKNFLPLLDAVSRDFVSVLHRRIKKAGSGNFSGDISDDLFRFAFESITNVIFGERQGMLEEVVNPEGQRFIDAIYQMFHTSVHMLNLPPDLFRLFRTKTWKDHVAPRDVIFSKADMYTENFHWELRQKGNVHHDYRGILYRLLGDSKMSFEDIKANVTEMLAGGVDTTSMTLQWHLYEMARNLKVQDMLRAEVLAARRQAQGDMATILQLVPLLKASIKETLRLHPISVTLQRYLVNDLVLRGYMIPAKTLVQVAIYALGREPTFFFDPENFDPTRWLSKDKNITYFRNLGFGWGVRQCLGRRIAELEMTIFLINMLENFRVEIQHLSDVGTTFNLILMPEKPISFTFWPFNQEATQE</sequence>
<protein>
    <recommendedName>
        <fullName evidence="2">Cholesterol side-chain cleavage enzyme, mitochondrial</fullName>
        <ecNumber evidence="2">1.14.15.6</ecNumber>
    </recommendedName>
    <alternativeName>
        <fullName>CYPXIA1</fullName>
    </alternativeName>
    <alternativeName>
        <fullName>Cholesterol desmolase</fullName>
    </alternativeName>
    <alternativeName>
        <fullName>Cytochrome P450 11A1</fullName>
    </alternativeName>
    <alternativeName>
        <fullName>Cytochrome P450(scc)</fullName>
    </alternativeName>
</protein>